<organism>
    <name type="scientific">Streptococcus pyogenes serotype M49 (strain NZ131)</name>
    <dbReference type="NCBI Taxonomy" id="471876"/>
    <lineage>
        <taxon>Bacteria</taxon>
        <taxon>Bacillati</taxon>
        <taxon>Bacillota</taxon>
        <taxon>Bacilli</taxon>
        <taxon>Lactobacillales</taxon>
        <taxon>Streptococcaceae</taxon>
        <taxon>Streptococcus</taxon>
    </lineage>
</organism>
<keyword id="KW-0227">DNA damage</keyword>
<keyword id="KW-0233">DNA recombination</keyword>
<keyword id="KW-0234">DNA repair</keyword>
<keyword id="KW-0479">Metal-binding</keyword>
<keyword id="KW-0862">Zinc</keyword>
<keyword id="KW-0863">Zinc-finger</keyword>
<proteinExistence type="inferred from homology"/>
<reference key="1">
    <citation type="journal article" date="2008" name="J. Bacteriol.">
        <title>Genome sequence of a nephritogenic and highly transformable M49 strain of Streptococcus pyogenes.</title>
        <authorList>
            <person name="McShan W.M."/>
            <person name="Ferretti J.J."/>
            <person name="Karasawa T."/>
            <person name="Suvorov A.N."/>
            <person name="Lin S."/>
            <person name="Qin B."/>
            <person name="Jia H."/>
            <person name="Kenton S."/>
            <person name="Najar F."/>
            <person name="Wu H."/>
            <person name="Scott J."/>
            <person name="Roe B.A."/>
            <person name="Savic D.J."/>
        </authorList>
    </citation>
    <scope>NUCLEOTIDE SEQUENCE [LARGE SCALE GENOMIC DNA]</scope>
    <source>
        <strain>NZ131</strain>
    </source>
</reference>
<gene>
    <name evidence="1" type="primary">recR</name>
    <name type="ordered locus">Spy49_1138c</name>
</gene>
<sequence>MLYPTPIAKLIDSYSKLPGIGIKTATRLAFYTIGMSNEDVNDFAKNLLAAKRELTYCSICGNLTDDDPCHICTDTSRDQTTILVVEDAKDVSAMEKIQEYHGYYHVLHGLISPMNGVGPDDINLKSLITRLMDGKVSEVIVATNATADGEATSMYISRVLKPAGIKVTRLARGLAVGSDIEYADEVTLLRAIENRTEL</sequence>
<protein>
    <recommendedName>
        <fullName evidence="1">Recombination protein RecR</fullName>
    </recommendedName>
</protein>
<name>RECR_STRPZ</name>
<feature type="chain" id="PRO_1000089776" description="Recombination protein RecR">
    <location>
        <begin position="1"/>
        <end position="198"/>
    </location>
</feature>
<feature type="domain" description="Toprim" evidence="1">
    <location>
        <begin position="80"/>
        <end position="175"/>
    </location>
</feature>
<feature type="zinc finger region" description="C4-type" evidence="1">
    <location>
        <begin position="57"/>
        <end position="72"/>
    </location>
</feature>
<dbReference type="EMBL" id="CP000829">
    <property type="protein sequence ID" value="ACI61426.1"/>
    <property type="molecule type" value="Genomic_DNA"/>
</dbReference>
<dbReference type="SMR" id="B5XM64"/>
<dbReference type="KEGG" id="soz:Spy49_1138c"/>
<dbReference type="HOGENOM" id="CLU_060739_1_0_9"/>
<dbReference type="Proteomes" id="UP000001039">
    <property type="component" value="Chromosome"/>
</dbReference>
<dbReference type="GO" id="GO:0003677">
    <property type="term" value="F:DNA binding"/>
    <property type="evidence" value="ECO:0007669"/>
    <property type="project" value="UniProtKB-UniRule"/>
</dbReference>
<dbReference type="GO" id="GO:0008270">
    <property type="term" value="F:zinc ion binding"/>
    <property type="evidence" value="ECO:0007669"/>
    <property type="project" value="UniProtKB-KW"/>
</dbReference>
<dbReference type="GO" id="GO:0006310">
    <property type="term" value="P:DNA recombination"/>
    <property type="evidence" value="ECO:0007669"/>
    <property type="project" value="UniProtKB-UniRule"/>
</dbReference>
<dbReference type="GO" id="GO:0006281">
    <property type="term" value="P:DNA repair"/>
    <property type="evidence" value="ECO:0007669"/>
    <property type="project" value="UniProtKB-UniRule"/>
</dbReference>
<dbReference type="CDD" id="cd01025">
    <property type="entry name" value="TOPRIM_recR"/>
    <property type="match status" value="1"/>
</dbReference>
<dbReference type="Gene3D" id="3.30.60.80">
    <property type="match status" value="1"/>
</dbReference>
<dbReference type="Gene3D" id="3.40.1360.10">
    <property type="match status" value="1"/>
</dbReference>
<dbReference type="Gene3D" id="6.10.250.240">
    <property type="match status" value="1"/>
</dbReference>
<dbReference type="Gene3D" id="1.10.8.420">
    <property type="entry name" value="RecR Domain 1"/>
    <property type="match status" value="1"/>
</dbReference>
<dbReference type="HAMAP" id="MF_00017">
    <property type="entry name" value="RecR"/>
    <property type="match status" value="1"/>
</dbReference>
<dbReference type="InterPro" id="IPR000093">
    <property type="entry name" value="DNA_Rcmb_RecR"/>
</dbReference>
<dbReference type="InterPro" id="IPR023627">
    <property type="entry name" value="Rcmb_RecR"/>
</dbReference>
<dbReference type="InterPro" id="IPR015967">
    <property type="entry name" value="Rcmb_RecR_Znf"/>
</dbReference>
<dbReference type="InterPro" id="IPR006171">
    <property type="entry name" value="TOPRIM_dom"/>
</dbReference>
<dbReference type="InterPro" id="IPR034137">
    <property type="entry name" value="TOPRIM_RecR"/>
</dbReference>
<dbReference type="NCBIfam" id="TIGR00615">
    <property type="entry name" value="recR"/>
    <property type="match status" value="1"/>
</dbReference>
<dbReference type="PANTHER" id="PTHR30446">
    <property type="entry name" value="RECOMBINATION PROTEIN RECR"/>
    <property type="match status" value="1"/>
</dbReference>
<dbReference type="PANTHER" id="PTHR30446:SF0">
    <property type="entry name" value="RECOMBINATION PROTEIN RECR"/>
    <property type="match status" value="1"/>
</dbReference>
<dbReference type="Pfam" id="PF21175">
    <property type="entry name" value="RecR_C"/>
    <property type="match status" value="1"/>
</dbReference>
<dbReference type="Pfam" id="PF21176">
    <property type="entry name" value="RecR_HhH"/>
    <property type="match status" value="1"/>
</dbReference>
<dbReference type="Pfam" id="PF02132">
    <property type="entry name" value="RecR_ZnF"/>
    <property type="match status" value="1"/>
</dbReference>
<dbReference type="Pfam" id="PF13662">
    <property type="entry name" value="Toprim_4"/>
    <property type="match status" value="1"/>
</dbReference>
<dbReference type="SMART" id="SM00493">
    <property type="entry name" value="TOPRIM"/>
    <property type="match status" value="1"/>
</dbReference>
<dbReference type="SUPFAM" id="SSF111304">
    <property type="entry name" value="Recombination protein RecR"/>
    <property type="match status" value="1"/>
</dbReference>
<dbReference type="PROSITE" id="PS01300">
    <property type="entry name" value="RECR"/>
    <property type="match status" value="1"/>
</dbReference>
<dbReference type="PROSITE" id="PS50880">
    <property type="entry name" value="TOPRIM"/>
    <property type="match status" value="1"/>
</dbReference>
<comment type="function">
    <text evidence="1">May play a role in DNA repair. It seems to be involved in an RecBC-independent recombinational process of DNA repair. It may act with RecF and RecO.</text>
</comment>
<comment type="similarity">
    <text evidence="1">Belongs to the RecR family.</text>
</comment>
<accession>B5XM64</accession>
<evidence type="ECO:0000255" key="1">
    <source>
        <dbReference type="HAMAP-Rule" id="MF_00017"/>
    </source>
</evidence>